<reference key="1">
    <citation type="journal article" date="2010" name="PLoS ONE">
        <title>The complete multipartite genome sequence of Cupriavidus necator JMP134, a versatile pollutant degrader.</title>
        <authorList>
            <person name="Lykidis A."/>
            <person name="Perez-Pantoja D."/>
            <person name="Ledger T."/>
            <person name="Mavromatis K."/>
            <person name="Anderson I.J."/>
            <person name="Ivanova N.N."/>
            <person name="Hooper S.D."/>
            <person name="Lapidus A."/>
            <person name="Lucas S."/>
            <person name="Gonzalez B."/>
            <person name="Kyrpides N.C."/>
        </authorList>
    </citation>
    <scope>NUCLEOTIDE SEQUENCE [LARGE SCALE GENOMIC DNA]</scope>
    <source>
        <strain>JMP134 / LMG 1197</strain>
    </source>
</reference>
<accession>Q476V3</accession>
<proteinExistence type="inferred from homology"/>
<keyword id="KW-0028">Amino-acid biosynthesis</keyword>
<keyword id="KW-0963">Cytoplasm</keyword>
<keyword id="KW-0413">Isomerase</keyword>
<keyword id="KW-0457">Lysine biosynthesis</keyword>
<evidence type="ECO:0000255" key="1">
    <source>
        <dbReference type="HAMAP-Rule" id="MF_00197"/>
    </source>
</evidence>
<protein>
    <recommendedName>
        <fullName evidence="1">Diaminopimelate epimerase</fullName>
        <shortName evidence="1">DAP epimerase</shortName>
        <ecNumber evidence="1">5.1.1.7</ecNumber>
    </recommendedName>
    <alternativeName>
        <fullName evidence="1">PLP-independent amino acid racemase</fullName>
    </alternativeName>
</protein>
<organism>
    <name type="scientific">Cupriavidus pinatubonensis (strain JMP 134 / LMG 1197)</name>
    <name type="common">Cupriavidus necator (strain JMP 134)</name>
    <dbReference type="NCBI Taxonomy" id="264198"/>
    <lineage>
        <taxon>Bacteria</taxon>
        <taxon>Pseudomonadati</taxon>
        <taxon>Pseudomonadota</taxon>
        <taxon>Betaproteobacteria</taxon>
        <taxon>Burkholderiales</taxon>
        <taxon>Burkholderiaceae</taxon>
        <taxon>Cupriavidus</taxon>
    </lineage>
</organism>
<gene>
    <name evidence="1" type="primary">dapF</name>
    <name type="ordered locus">Reut_A0198</name>
</gene>
<dbReference type="EC" id="5.1.1.7" evidence="1"/>
<dbReference type="EMBL" id="CP000090">
    <property type="protein sequence ID" value="AAZ59580.1"/>
    <property type="molecule type" value="Genomic_DNA"/>
</dbReference>
<dbReference type="SMR" id="Q476V3"/>
<dbReference type="STRING" id="264198.Reut_A0198"/>
<dbReference type="KEGG" id="reu:Reut_A0198"/>
<dbReference type="eggNOG" id="COG0253">
    <property type="taxonomic scope" value="Bacteria"/>
</dbReference>
<dbReference type="HOGENOM" id="CLU_053306_1_1_4"/>
<dbReference type="OrthoDB" id="9805408at2"/>
<dbReference type="UniPathway" id="UPA00034">
    <property type="reaction ID" value="UER00025"/>
</dbReference>
<dbReference type="GO" id="GO:0005829">
    <property type="term" value="C:cytosol"/>
    <property type="evidence" value="ECO:0007669"/>
    <property type="project" value="TreeGrafter"/>
</dbReference>
<dbReference type="GO" id="GO:0008837">
    <property type="term" value="F:diaminopimelate epimerase activity"/>
    <property type="evidence" value="ECO:0007669"/>
    <property type="project" value="UniProtKB-UniRule"/>
</dbReference>
<dbReference type="GO" id="GO:0009089">
    <property type="term" value="P:lysine biosynthetic process via diaminopimelate"/>
    <property type="evidence" value="ECO:0007669"/>
    <property type="project" value="UniProtKB-UniRule"/>
</dbReference>
<dbReference type="FunFam" id="3.10.310.10:FF:000001">
    <property type="entry name" value="Diaminopimelate epimerase"/>
    <property type="match status" value="1"/>
</dbReference>
<dbReference type="Gene3D" id="3.10.310.10">
    <property type="entry name" value="Diaminopimelate Epimerase, Chain A, domain 1"/>
    <property type="match status" value="2"/>
</dbReference>
<dbReference type="HAMAP" id="MF_00197">
    <property type="entry name" value="DAP_epimerase"/>
    <property type="match status" value="1"/>
</dbReference>
<dbReference type="InterPro" id="IPR018510">
    <property type="entry name" value="DAP_epimerase_AS"/>
</dbReference>
<dbReference type="InterPro" id="IPR001653">
    <property type="entry name" value="DAP_epimerase_DapF"/>
</dbReference>
<dbReference type="NCBIfam" id="TIGR00652">
    <property type="entry name" value="DapF"/>
    <property type="match status" value="1"/>
</dbReference>
<dbReference type="PANTHER" id="PTHR31689:SF0">
    <property type="entry name" value="DIAMINOPIMELATE EPIMERASE"/>
    <property type="match status" value="1"/>
</dbReference>
<dbReference type="PANTHER" id="PTHR31689">
    <property type="entry name" value="DIAMINOPIMELATE EPIMERASE, CHLOROPLASTIC"/>
    <property type="match status" value="1"/>
</dbReference>
<dbReference type="Pfam" id="PF01678">
    <property type="entry name" value="DAP_epimerase"/>
    <property type="match status" value="2"/>
</dbReference>
<dbReference type="SUPFAM" id="SSF54506">
    <property type="entry name" value="Diaminopimelate epimerase-like"/>
    <property type="match status" value="1"/>
</dbReference>
<dbReference type="PROSITE" id="PS01326">
    <property type="entry name" value="DAP_EPIMERASE"/>
    <property type="match status" value="1"/>
</dbReference>
<comment type="function">
    <text evidence="1">Catalyzes the stereoinversion of LL-2,6-diaminopimelate (L,L-DAP) to meso-diaminopimelate (meso-DAP), a precursor of L-lysine and an essential component of the bacterial peptidoglycan.</text>
</comment>
<comment type="catalytic activity">
    <reaction evidence="1">
        <text>(2S,6S)-2,6-diaminopimelate = meso-2,6-diaminopimelate</text>
        <dbReference type="Rhea" id="RHEA:15393"/>
        <dbReference type="ChEBI" id="CHEBI:57609"/>
        <dbReference type="ChEBI" id="CHEBI:57791"/>
        <dbReference type="EC" id="5.1.1.7"/>
    </reaction>
</comment>
<comment type="pathway">
    <text evidence="1">Amino-acid biosynthesis; L-lysine biosynthesis via DAP pathway; DL-2,6-diaminopimelate from LL-2,6-diaminopimelate: step 1/1.</text>
</comment>
<comment type="subunit">
    <text evidence="1">Homodimer.</text>
</comment>
<comment type="subcellular location">
    <subcellularLocation>
        <location evidence="1">Cytoplasm</location>
    </subcellularLocation>
</comment>
<comment type="similarity">
    <text evidence="1">Belongs to the diaminopimelate epimerase family.</text>
</comment>
<feature type="chain" id="PRO_1000011942" description="Diaminopimelate epimerase">
    <location>
        <begin position="1"/>
        <end position="288"/>
    </location>
</feature>
<feature type="active site" description="Proton donor" evidence="1">
    <location>
        <position position="75"/>
    </location>
</feature>
<feature type="active site" description="Proton acceptor" evidence="1">
    <location>
        <position position="226"/>
    </location>
</feature>
<feature type="binding site" evidence="1">
    <location>
        <position position="13"/>
    </location>
    <ligand>
        <name>substrate</name>
    </ligand>
</feature>
<feature type="binding site" evidence="1">
    <location>
        <position position="46"/>
    </location>
    <ligand>
        <name>substrate</name>
    </ligand>
</feature>
<feature type="binding site" evidence="1">
    <location>
        <position position="66"/>
    </location>
    <ligand>
        <name>substrate</name>
    </ligand>
</feature>
<feature type="binding site" evidence="1">
    <location>
        <begin position="76"/>
        <end position="77"/>
    </location>
    <ligand>
        <name>substrate</name>
    </ligand>
</feature>
<feature type="binding site" evidence="1">
    <location>
        <position position="166"/>
    </location>
    <ligand>
        <name>substrate</name>
    </ligand>
</feature>
<feature type="binding site" evidence="1">
    <location>
        <position position="199"/>
    </location>
    <ligand>
        <name>substrate</name>
    </ligand>
</feature>
<feature type="binding site" evidence="1">
    <location>
        <begin position="217"/>
        <end position="218"/>
    </location>
    <ligand>
        <name>substrate</name>
    </ligand>
</feature>
<feature type="binding site" evidence="1">
    <location>
        <begin position="227"/>
        <end position="228"/>
    </location>
    <ligand>
        <name>substrate</name>
    </ligand>
</feature>
<feature type="site" description="Could be important to modulate the pK values of the two catalytic cysteine residues" evidence="1">
    <location>
        <position position="168"/>
    </location>
</feature>
<feature type="site" description="Could be important to modulate the pK values of the two catalytic cysteine residues" evidence="1">
    <location>
        <position position="217"/>
    </location>
</feature>
<name>DAPF_CUPPJ</name>
<sequence>MKLQFTKMHGAGNDFVVLDGIHQKLDLTTEQWRALASRHFGVGADQMLIVEKPTREDVDFRYRIFNADGSEVEHCGNGARCFVRFVTDKGMTDKRSVRVEVMNGVITLTLQDDGQVTVDMGAPELEPARVPFRPDGLPVRTQGEDIAYGLEINGRTAWISPVSMGNPHAVQVVDDVENFPVLQDGPLIEHHATFPNRVNAGFLQVVDRHTARLRVFERGAGETLACGTGACAAVVAGIRRGLLDSPVKVHTHGGDLNIAWDGGAEPVRMTGPATTVFEGTIDLAALPA</sequence>